<comment type="function">
    <text evidence="1">This protein binds to the 23S rRNA, and is important in its secondary structure. It is located near the subunit interface in the base of the L7/L12 stalk, and near the tRNA binding site of the peptidyltransferase center.</text>
</comment>
<comment type="subunit">
    <text evidence="1">Part of the 50S ribosomal subunit.</text>
</comment>
<comment type="similarity">
    <text evidence="1">Belongs to the universal ribosomal protein uL6 family.</text>
</comment>
<gene>
    <name evidence="1" type="primary">rplF</name>
    <name type="ordered locus">FMG_0170</name>
</gene>
<reference key="1">
    <citation type="journal article" date="2008" name="DNA Res.">
        <title>Complete genome sequence of Finegoldia magna, an anaerobic opportunistic pathogen.</title>
        <authorList>
            <person name="Goto T."/>
            <person name="Yamashita A."/>
            <person name="Hirakawa H."/>
            <person name="Matsutani M."/>
            <person name="Todo K."/>
            <person name="Ohshima K."/>
            <person name="Toh H."/>
            <person name="Miyamoto K."/>
            <person name="Kuhara S."/>
            <person name="Hattori M."/>
            <person name="Shimizu T."/>
            <person name="Akimoto S."/>
        </authorList>
    </citation>
    <scope>NUCLEOTIDE SEQUENCE [LARGE SCALE GENOMIC DNA]</scope>
    <source>
        <strain>ATCC 29328 / DSM 20472 / WAL 2508</strain>
    </source>
</reference>
<proteinExistence type="inferred from homology"/>
<evidence type="ECO:0000255" key="1">
    <source>
        <dbReference type="HAMAP-Rule" id="MF_01365"/>
    </source>
</evidence>
<evidence type="ECO:0000305" key="2"/>
<feature type="chain" id="PRO_1000143992" description="Large ribosomal subunit protein uL6">
    <location>
        <begin position="1"/>
        <end position="179"/>
    </location>
</feature>
<organism>
    <name type="scientific">Finegoldia magna (strain ATCC 29328 / DSM 20472 / WAL 2508)</name>
    <name type="common">Peptostreptococcus magnus</name>
    <dbReference type="NCBI Taxonomy" id="334413"/>
    <lineage>
        <taxon>Bacteria</taxon>
        <taxon>Bacillati</taxon>
        <taxon>Bacillota</taxon>
        <taxon>Tissierellia</taxon>
        <taxon>Tissierellales</taxon>
        <taxon>Peptoniphilaceae</taxon>
        <taxon>Finegoldia</taxon>
    </lineage>
</organism>
<dbReference type="EMBL" id="AP008971">
    <property type="protein sequence ID" value="BAG07588.1"/>
    <property type="molecule type" value="Genomic_DNA"/>
</dbReference>
<dbReference type="RefSeq" id="WP_002837386.1">
    <property type="nucleotide sequence ID" value="NC_010376.1"/>
</dbReference>
<dbReference type="SMR" id="B0RZS4"/>
<dbReference type="STRING" id="334413.FMG_0170"/>
<dbReference type="KEGG" id="fma:FMG_0170"/>
<dbReference type="eggNOG" id="COG0097">
    <property type="taxonomic scope" value="Bacteria"/>
</dbReference>
<dbReference type="HOGENOM" id="CLU_065464_1_2_9"/>
<dbReference type="Proteomes" id="UP000001319">
    <property type="component" value="Chromosome"/>
</dbReference>
<dbReference type="GO" id="GO:0022625">
    <property type="term" value="C:cytosolic large ribosomal subunit"/>
    <property type="evidence" value="ECO:0007669"/>
    <property type="project" value="TreeGrafter"/>
</dbReference>
<dbReference type="GO" id="GO:0019843">
    <property type="term" value="F:rRNA binding"/>
    <property type="evidence" value="ECO:0007669"/>
    <property type="project" value="UniProtKB-UniRule"/>
</dbReference>
<dbReference type="GO" id="GO:0003735">
    <property type="term" value="F:structural constituent of ribosome"/>
    <property type="evidence" value="ECO:0007669"/>
    <property type="project" value="InterPro"/>
</dbReference>
<dbReference type="GO" id="GO:0002181">
    <property type="term" value="P:cytoplasmic translation"/>
    <property type="evidence" value="ECO:0007669"/>
    <property type="project" value="TreeGrafter"/>
</dbReference>
<dbReference type="FunFam" id="3.90.930.12:FF:000001">
    <property type="entry name" value="50S ribosomal protein L6"/>
    <property type="match status" value="1"/>
</dbReference>
<dbReference type="FunFam" id="3.90.930.12:FF:000002">
    <property type="entry name" value="50S ribosomal protein L6"/>
    <property type="match status" value="1"/>
</dbReference>
<dbReference type="Gene3D" id="3.90.930.12">
    <property type="entry name" value="Ribosomal protein L6, alpha-beta domain"/>
    <property type="match status" value="2"/>
</dbReference>
<dbReference type="HAMAP" id="MF_01365_B">
    <property type="entry name" value="Ribosomal_uL6_B"/>
    <property type="match status" value="1"/>
</dbReference>
<dbReference type="InterPro" id="IPR000702">
    <property type="entry name" value="Ribosomal_uL6-like"/>
</dbReference>
<dbReference type="InterPro" id="IPR036789">
    <property type="entry name" value="Ribosomal_uL6-like_a/b-dom_sf"/>
</dbReference>
<dbReference type="InterPro" id="IPR020040">
    <property type="entry name" value="Ribosomal_uL6_a/b-dom"/>
</dbReference>
<dbReference type="InterPro" id="IPR019906">
    <property type="entry name" value="Ribosomal_uL6_bac-type"/>
</dbReference>
<dbReference type="InterPro" id="IPR002358">
    <property type="entry name" value="Ribosomal_uL6_CS"/>
</dbReference>
<dbReference type="NCBIfam" id="TIGR03654">
    <property type="entry name" value="L6_bact"/>
    <property type="match status" value="1"/>
</dbReference>
<dbReference type="PANTHER" id="PTHR11655">
    <property type="entry name" value="60S/50S RIBOSOMAL PROTEIN L6/L9"/>
    <property type="match status" value="1"/>
</dbReference>
<dbReference type="PANTHER" id="PTHR11655:SF14">
    <property type="entry name" value="LARGE RIBOSOMAL SUBUNIT PROTEIN UL6M"/>
    <property type="match status" value="1"/>
</dbReference>
<dbReference type="Pfam" id="PF00347">
    <property type="entry name" value="Ribosomal_L6"/>
    <property type="match status" value="2"/>
</dbReference>
<dbReference type="PIRSF" id="PIRSF002162">
    <property type="entry name" value="Ribosomal_L6"/>
    <property type="match status" value="1"/>
</dbReference>
<dbReference type="PRINTS" id="PR00059">
    <property type="entry name" value="RIBOSOMALL6"/>
</dbReference>
<dbReference type="SUPFAM" id="SSF56053">
    <property type="entry name" value="Ribosomal protein L6"/>
    <property type="match status" value="2"/>
</dbReference>
<dbReference type="PROSITE" id="PS00525">
    <property type="entry name" value="RIBOSOMAL_L6_1"/>
    <property type="match status" value="1"/>
</dbReference>
<sequence length="179" mass="20027">MSRIGLKPIEIPNGVEVKVTEDNLCTVKGPKGELVEQMPKEMIIKVEDNTITVSRPSEIKRHKSLHGLTRTLVFNMIEGVTEGYKKTLIIEGTGYRAAKQGKKLVLNLGYSHTIEKEDPEGISVEVPEQHTLIISGINKQQVGNYAAKIRDLRGPEPYKGKGIRYEDEHIRRKVGKTGK</sequence>
<name>RL6_FINM2</name>
<accession>B0RZS4</accession>
<protein>
    <recommendedName>
        <fullName evidence="1">Large ribosomal subunit protein uL6</fullName>
    </recommendedName>
    <alternativeName>
        <fullName evidence="2">50S ribosomal protein L6</fullName>
    </alternativeName>
</protein>
<keyword id="KW-1185">Reference proteome</keyword>
<keyword id="KW-0687">Ribonucleoprotein</keyword>
<keyword id="KW-0689">Ribosomal protein</keyword>
<keyword id="KW-0694">RNA-binding</keyword>
<keyword id="KW-0699">rRNA-binding</keyword>